<accession>B1XT33</accession>
<organism>
    <name type="scientific">Polynucleobacter necessarius subsp. necessarius (strain STIR1)</name>
    <dbReference type="NCBI Taxonomy" id="452638"/>
    <lineage>
        <taxon>Bacteria</taxon>
        <taxon>Pseudomonadati</taxon>
        <taxon>Pseudomonadota</taxon>
        <taxon>Betaproteobacteria</taxon>
        <taxon>Burkholderiales</taxon>
        <taxon>Burkholderiaceae</taxon>
        <taxon>Polynucleobacter</taxon>
    </lineage>
</organism>
<comment type="function">
    <text evidence="1">This protein binds to 23S rRNA in the presence of protein L20.</text>
</comment>
<comment type="subunit">
    <text evidence="1">Part of the 50S ribosomal subunit. Contacts protein L20.</text>
</comment>
<comment type="similarity">
    <text evidence="1">Belongs to the bacterial ribosomal protein bL21 family.</text>
</comment>
<keyword id="KW-0687">Ribonucleoprotein</keyword>
<keyword id="KW-0689">Ribosomal protein</keyword>
<keyword id="KW-0694">RNA-binding</keyword>
<keyword id="KW-0699">rRNA-binding</keyword>
<gene>
    <name evidence="1" type="primary">rplU</name>
    <name type="ordered locus">Pnec_0212</name>
</gene>
<reference key="1">
    <citation type="journal article" date="2013" name="Proc. Natl. Acad. Sci. U.S.A.">
        <title>Polynucleobacter necessarius, a model for genome reduction in both free-living and symbiotic bacteria.</title>
        <authorList>
            <person name="Boscaro V."/>
            <person name="Felletti M."/>
            <person name="Vannini C."/>
            <person name="Ackerman M.S."/>
            <person name="Chain P.S."/>
            <person name="Malfatti S."/>
            <person name="Vergez L.M."/>
            <person name="Shin M."/>
            <person name="Doak T.G."/>
            <person name="Lynch M."/>
            <person name="Petroni G."/>
        </authorList>
    </citation>
    <scope>NUCLEOTIDE SEQUENCE [LARGE SCALE GENOMIC DNA]</scope>
    <source>
        <strain>STIR1</strain>
    </source>
</reference>
<sequence length="103" mass="11370">MYAVIKTGGKQYKVAAGEKLKIEQIPAEIGSEITLDQVLAVGESASLKLGDPLVNGAAVMATVVSQGRHDKVTIFKMRRRKHYQKHQGHRQNFTEILINTIKA</sequence>
<protein>
    <recommendedName>
        <fullName evidence="1">Large ribosomal subunit protein bL21</fullName>
    </recommendedName>
    <alternativeName>
        <fullName evidence="2">50S ribosomal protein L21</fullName>
    </alternativeName>
</protein>
<feature type="chain" id="PRO_1000143832" description="Large ribosomal subunit protein bL21">
    <location>
        <begin position="1"/>
        <end position="103"/>
    </location>
</feature>
<proteinExistence type="inferred from homology"/>
<dbReference type="EMBL" id="CP001010">
    <property type="protein sequence ID" value="ACB43510.1"/>
    <property type="molecule type" value="Genomic_DNA"/>
</dbReference>
<dbReference type="SMR" id="B1XT33"/>
<dbReference type="STRING" id="452638.Pnec_0212"/>
<dbReference type="KEGG" id="pne:Pnec_0212"/>
<dbReference type="eggNOG" id="COG0261">
    <property type="taxonomic scope" value="Bacteria"/>
</dbReference>
<dbReference type="HOGENOM" id="CLU_061463_3_2_4"/>
<dbReference type="OrthoDB" id="9813334at2"/>
<dbReference type="GO" id="GO:0005737">
    <property type="term" value="C:cytoplasm"/>
    <property type="evidence" value="ECO:0007669"/>
    <property type="project" value="UniProtKB-ARBA"/>
</dbReference>
<dbReference type="GO" id="GO:1990904">
    <property type="term" value="C:ribonucleoprotein complex"/>
    <property type="evidence" value="ECO:0007669"/>
    <property type="project" value="UniProtKB-KW"/>
</dbReference>
<dbReference type="GO" id="GO:0005840">
    <property type="term" value="C:ribosome"/>
    <property type="evidence" value="ECO:0007669"/>
    <property type="project" value="UniProtKB-KW"/>
</dbReference>
<dbReference type="GO" id="GO:0019843">
    <property type="term" value="F:rRNA binding"/>
    <property type="evidence" value="ECO:0007669"/>
    <property type="project" value="UniProtKB-UniRule"/>
</dbReference>
<dbReference type="GO" id="GO:0003735">
    <property type="term" value="F:structural constituent of ribosome"/>
    <property type="evidence" value="ECO:0007669"/>
    <property type="project" value="InterPro"/>
</dbReference>
<dbReference type="GO" id="GO:0006412">
    <property type="term" value="P:translation"/>
    <property type="evidence" value="ECO:0007669"/>
    <property type="project" value="UniProtKB-UniRule"/>
</dbReference>
<dbReference type="HAMAP" id="MF_01363">
    <property type="entry name" value="Ribosomal_bL21"/>
    <property type="match status" value="1"/>
</dbReference>
<dbReference type="InterPro" id="IPR028909">
    <property type="entry name" value="bL21-like"/>
</dbReference>
<dbReference type="InterPro" id="IPR036164">
    <property type="entry name" value="bL21-like_sf"/>
</dbReference>
<dbReference type="InterPro" id="IPR001787">
    <property type="entry name" value="Ribosomal_bL21"/>
</dbReference>
<dbReference type="InterPro" id="IPR018258">
    <property type="entry name" value="Ribosomal_bL21_CS"/>
</dbReference>
<dbReference type="NCBIfam" id="TIGR00061">
    <property type="entry name" value="L21"/>
    <property type="match status" value="1"/>
</dbReference>
<dbReference type="PANTHER" id="PTHR21349">
    <property type="entry name" value="50S RIBOSOMAL PROTEIN L21"/>
    <property type="match status" value="1"/>
</dbReference>
<dbReference type="PANTHER" id="PTHR21349:SF0">
    <property type="entry name" value="LARGE RIBOSOMAL SUBUNIT PROTEIN BL21M"/>
    <property type="match status" value="1"/>
</dbReference>
<dbReference type="Pfam" id="PF00829">
    <property type="entry name" value="Ribosomal_L21p"/>
    <property type="match status" value="1"/>
</dbReference>
<dbReference type="SUPFAM" id="SSF141091">
    <property type="entry name" value="L21p-like"/>
    <property type="match status" value="1"/>
</dbReference>
<dbReference type="PROSITE" id="PS01169">
    <property type="entry name" value="RIBOSOMAL_L21"/>
    <property type="match status" value="1"/>
</dbReference>
<evidence type="ECO:0000255" key="1">
    <source>
        <dbReference type="HAMAP-Rule" id="MF_01363"/>
    </source>
</evidence>
<evidence type="ECO:0000305" key="2"/>
<name>RL21_POLNS</name>